<gene>
    <name evidence="1" type="primary">rpsP</name>
    <name type="ordered locus">Oter_3099</name>
</gene>
<dbReference type="EMBL" id="CP001032">
    <property type="protein sequence ID" value="ACB76379.1"/>
    <property type="molecule type" value="Genomic_DNA"/>
</dbReference>
<dbReference type="RefSeq" id="WP_012375908.1">
    <property type="nucleotide sequence ID" value="NC_010571.1"/>
</dbReference>
<dbReference type="SMR" id="B1ZZH6"/>
<dbReference type="STRING" id="452637.Oter_3099"/>
<dbReference type="KEGG" id="ote:Oter_3099"/>
<dbReference type="eggNOG" id="COG0228">
    <property type="taxonomic scope" value="Bacteria"/>
</dbReference>
<dbReference type="HOGENOM" id="CLU_100590_5_1_0"/>
<dbReference type="OrthoDB" id="9807878at2"/>
<dbReference type="Proteomes" id="UP000007013">
    <property type="component" value="Chromosome"/>
</dbReference>
<dbReference type="GO" id="GO:0005737">
    <property type="term" value="C:cytoplasm"/>
    <property type="evidence" value="ECO:0007669"/>
    <property type="project" value="UniProtKB-ARBA"/>
</dbReference>
<dbReference type="GO" id="GO:0015935">
    <property type="term" value="C:small ribosomal subunit"/>
    <property type="evidence" value="ECO:0007669"/>
    <property type="project" value="TreeGrafter"/>
</dbReference>
<dbReference type="GO" id="GO:0003735">
    <property type="term" value="F:structural constituent of ribosome"/>
    <property type="evidence" value="ECO:0007669"/>
    <property type="project" value="InterPro"/>
</dbReference>
<dbReference type="GO" id="GO:0006412">
    <property type="term" value="P:translation"/>
    <property type="evidence" value="ECO:0007669"/>
    <property type="project" value="UniProtKB-UniRule"/>
</dbReference>
<dbReference type="Gene3D" id="3.30.1320.10">
    <property type="match status" value="1"/>
</dbReference>
<dbReference type="HAMAP" id="MF_00385">
    <property type="entry name" value="Ribosomal_bS16"/>
    <property type="match status" value="1"/>
</dbReference>
<dbReference type="InterPro" id="IPR000307">
    <property type="entry name" value="Ribosomal_bS16"/>
</dbReference>
<dbReference type="InterPro" id="IPR023803">
    <property type="entry name" value="Ribosomal_bS16_dom_sf"/>
</dbReference>
<dbReference type="NCBIfam" id="TIGR00002">
    <property type="entry name" value="S16"/>
    <property type="match status" value="1"/>
</dbReference>
<dbReference type="PANTHER" id="PTHR12919">
    <property type="entry name" value="30S RIBOSOMAL PROTEIN S16"/>
    <property type="match status" value="1"/>
</dbReference>
<dbReference type="PANTHER" id="PTHR12919:SF20">
    <property type="entry name" value="SMALL RIBOSOMAL SUBUNIT PROTEIN BS16M"/>
    <property type="match status" value="1"/>
</dbReference>
<dbReference type="Pfam" id="PF00886">
    <property type="entry name" value="Ribosomal_S16"/>
    <property type="match status" value="1"/>
</dbReference>
<dbReference type="SUPFAM" id="SSF54565">
    <property type="entry name" value="Ribosomal protein S16"/>
    <property type="match status" value="1"/>
</dbReference>
<keyword id="KW-1185">Reference proteome</keyword>
<keyword id="KW-0687">Ribonucleoprotein</keyword>
<keyword id="KW-0689">Ribosomal protein</keyword>
<comment type="similarity">
    <text evidence="1">Belongs to the bacterial ribosomal protein bS16 family.</text>
</comment>
<sequence length="93" mass="10077">MALKIRLTKVGSVHQPLYRVVVAEARSRRDGDAVENLGTYTPKSKGSPIKLNMERVDYWLSKGALPTNTMHAMIKKARRSAAAQAEAAPAASA</sequence>
<protein>
    <recommendedName>
        <fullName evidence="1">Small ribosomal subunit protein bS16</fullName>
    </recommendedName>
    <alternativeName>
        <fullName evidence="2">30S ribosomal protein S16</fullName>
    </alternativeName>
</protein>
<proteinExistence type="inferred from homology"/>
<reference key="1">
    <citation type="journal article" date="2011" name="J. Bacteriol.">
        <title>Genome sequence of the verrucomicrobium Opitutus terrae PB90-1, an abundant inhabitant of rice paddy soil ecosystems.</title>
        <authorList>
            <person name="van Passel M.W."/>
            <person name="Kant R."/>
            <person name="Palva A."/>
            <person name="Copeland A."/>
            <person name="Lucas S."/>
            <person name="Lapidus A."/>
            <person name="Glavina del Rio T."/>
            <person name="Pitluck S."/>
            <person name="Goltsman E."/>
            <person name="Clum A."/>
            <person name="Sun H."/>
            <person name="Schmutz J."/>
            <person name="Larimer F.W."/>
            <person name="Land M.L."/>
            <person name="Hauser L."/>
            <person name="Kyrpides N."/>
            <person name="Mikhailova N."/>
            <person name="Richardson P.P."/>
            <person name="Janssen P.H."/>
            <person name="de Vos W.M."/>
            <person name="Smidt H."/>
        </authorList>
    </citation>
    <scope>NUCLEOTIDE SEQUENCE [LARGE SCALE GENOMIC DNA]</scope>
    <source>
        <strain>DSM 11246 / JCM 15787 / PB90-1</strain>
    </source>
</reference>
<evidence type="ECO:0000255" key="1">
    <source>
        <dbReference type="HAMAP-Rule" id="MF_00385"/>
    </source>
</evidence>
<evidence type="ECO:0000305" key="2"/>
<organism>
    <name type="scientific">Opitutus terrae (strain DSM 11246 / JCM 15787 / PB90-1)</name>
    <dbReference type="NCBI Taxonomy" id="452637"/>
    <lineage>
        <taxon>Bacteria</taxon>
        <taxon>Pseudomonadati</taxon>
        <taxon>Verrucomicrobiota</taxon>
        <taxon>Opitutia</taxon>
        <taxon>Opitutales</taxon>
        <taxon>Opitutaceae</taxon>
        <taxon>Opitutus</taxon>
    </lineage>
</organism>
<name>RS16_OPITP</name>
<accession>B1ZZH6</accession>
<feature type="chain" id="PRO_1000196448" description="Small ribosomal subunit protein bS16">
    <location>
        <begin position="1"/>
        <end position="93"/>
    </location>
</feature>